<comment type="function">
    <text evidence="1 2">An alpha subtype methylase that recognizes the double-stranded sequence 5'-GGTGA-3', probably methylates A-5 on the top strand, and protects the DNA from cleavage by the HphI endonuclease.</text>
</comment>
<comment type="catalytic activity">
    <reaction>
        <text>a 2'-deoxyadenosine in DNA + S-adenosyl-L-methionine = an N(6)-methyl-2'-deoxyadenosine in DNA + S-adenosyl-L-homocysteine + H(+)</text>
        <dbReference type="Rhea" id="RHEA:15197"/>
        <dbReference type="Rhea" id="RHEA-COMP:12418"/>
        <dbReference type="Rhea" id="RHEA-COMP:12419"/>
        <dbReference type="ChEBI" id="CHEBI:15378"/>
        <dbReference type="ChEBI" id="CHEBI:57856"/>
        <dbReference type="ChEBI" id="CHEBI:59789"/>
        <dbReference type="ChEBI" id="CHEBI:90615"/>
        <dbReference type="ChEBI" id="CHEBI:90616"/>
        <dbReference type="EC" id="2.1.1.72"/>
    </reaction>
</comment>
<comment type="miscellaneous">
    <text evidence="1">Both this methylase and M1.HphI protect DNA from cleavage by HphI.</text>
</comment>
<comment type="similarity">
    <text evidence="4">Belongs to the N(4)/N(6)-methyltransferase family.</text>
</comment>
<reference key="1">
    <citation type="journal article" date="1996" name="Nucleic Acids Res.">
        <title>Cloning and analysis of the genes encoding the type IIS restriction-modification system HphI from Haemophilus parahaemolyticus.</title>
        <authorList>
            <person name="Lubys A."/>
            <person name="Lubiene J."/>
            <person name="Kulakauskkas S."/>
            <person name="Stankevicius K."/>
            <person name="Timinskas A."/>
            <person name="Janulaitis A."/>
        </authorList>
    </citation>
    <scope>NUCLEOTIDE SEQUENCE [GENOMIC DNA]</scope>
    <scope>FUNCTION</scope>
    <source>
        <strain>ATCC 49700</strain>
    </source>
</reference>
<reference key="2">
    <citation type="journal article" date="2003" name="Nucleic Acids Res.">
        <title>A nomenclature for restriction enzymes, DNA methyltransferases, homing endonucleases and their genes.</title>
        <authorList>
            <person name="Roberts R.J."/>
            <person name="Belfort M."/>
            <person name="Bestor T."/>
            <person name="Bhagwat A.S."/>
            <person name="Bickle T.A."/>
            <person name="Bitinaite J."/>
            <person name="Blumenthal R.M."/>
            <person name="Degtyarev S.K."/>
            <person name="Dryden D.T."/>
            <person name="Dybvig K."/>
            <person name="Firman K."/>
            <person name="Gromova E.S."/>
            <person name="Gumport R.I."/>
            <person name="Halford S.E."/>
            <person name="Hattman S."/>
            <person name="Heitman J."/>
            <person name="Hornby D.P."/>
            <person name="Janulaitis A."/>
            <person name="Jeltsch A."/>
            <person name="Josephsen J."/>
            <person name="Kiss A."/>
            <person name="Klaenhammer T.R."/>
            <person name="Kobayashi I."/>
            <person name="Kong H."/>
            <person name="Krueger D.H."/>
            <person name="Lacks S."/>
            <person name="Marinus M.G."/>
            <person name="Miyahara M."/>
            <person name="Morgan R.D."/>
            <person name="Murray N.E."/>
            <person name="Nagaraja V."/>
            <person name="Piekarowicz A."/>
            <person name="Pingoud A."/>
            <person name="Raleigh E."/>
            <person name="Rao D.N."/>
            <person name="Reich N."/>
            <person name="Repin V.E."/>
            <person name="Selker E.U."/>
            <person name="Shaw P.C."/>
            <person name="Stein D.C."/>
            <person name="Stoddard B.L."/>
            <person name="Szybalski W."/>
            <person name="Trautner T.A."/>
            <person name="Van Etten J.L."/>
            <person name="Vitor J.M."/>
            <person name="Wilson G.G."/>
            <person name="Xu S.Y."/>
        </authorList>
    </citation>
    <scope>NOMENCLATURE</scope>
    <scope>SUBTYPE</scope>
</reference>
<gene>
    <name type="primary">hphIBM</name>
    <name evidence="3" type="synonym">hphIMA</name>
</gene>
<protein>
    <recommendedName>
        <fullName evidence="2">Type II methyltransferase M2.HphI</fullName>
        <shortName evidence="2">M2.HphI</shortName>
        <ecNumber>2.1.1.72</ecNumber>
    </recommendedName>
    <alternativeName>
        <fullName>Adenine-specific methyltransferase HphIB</fullName>
    </alternativeName>
    <alternativeName>
        <fullName>M.HphI(A)</fullName>
    </alternativeName>
    <alternativeName>
        <fullName>Modification methylase HphIB</fullName>
        <shortName>M.HphIB</shortName>
    </alternativeName>
</protein>
<accession>P50193</accession>
<keyword id="KW-0238">DNA-binding</keyword>
<keyword id="KW-0489">Methyltransferase</keyword>
<keyword id="KW-0680">Restriction system</keyword>
<keyword id="KW-0949">S-adenosyl-L-methionine</keyword>
<keyword id="KW-0808">Transferase</keyword>
<dbReference type="EC" id="2.1.1.72"/>
<dbReference type="EMBL" id="X85374">
    <property type="protein sequence ID" value="CAA59691.1"/>
    <property type="molecule type" value="Genomic_DNA"/>
</dbReference>
<dbReference type="PIR" id="S70708">
    <property type="entry name" value="S70708"/>
</dbReference>
<dbReference type="REBASE" id="3661">
    <property type="entry name" value="M2.HphI"/>
</dbReference>
<dbReference type="PRO" id="PR:P50193"/>
<dbReference type="GO" id="GO:0003677">
    <property type="term" value="F:DNA binding"/>
    <property type="evidence" value="ECO:0007669"/>
    <property type="project" value="UniProtKB-KW"/>
</dbReference>
<dbReference type="GO" id="GO:0009007">
    <property type="term" value="F:site-specific DNA-methyltransferase (adenine-specific) activity"/>
    <property type="evidence" value="ECO:0007669"/>
    <property type="project" value="UniProtKB-EC"/>
</dbReference>
<dbReference type="GO" id="GO:0009307">
    <property type="term" value="P:DNA restriction-modification system"/>
    <property type="evidence" value="ECO:0007669"/>
    <property type="project" value="UniProtKB-KW"/>
</dbReference>
<dbReference type="GO" id="GO:0032259">
    <property type="term" value="P:methylation"/>
    <property type="evidence" value="ECO:0007669"/>
    <property type="project" value="UniProtKB-KW"/>
</dbReference>
<dbReference type="Gene3D" id="3.40.50.150">
    <property type="entry name" value="Vaccinia Virus protein VP39"/>
    <property type="match status" value="2"/>
</dbReference>
<dbReference type="InterPro" id="IPR002052">
    <property type="entry name" value="DNA_methylase_N6_adenine_CS"/>
</dbReference>
<dbReference type="InterPro" id="IPR012327">
    <property type="entry name" value="MeTrfase_D12"/>
</dbReference>
<dbReference type="InterPro" id="IPR029063">
    <property type="entry name" value="SAM-dependent_MTases_sf"/>
</dbReference>
<dbReference type="Pfam" id="PF02086">
    <property type="entry name" value="MethyltransfD12"/>
    <property type="match status" value="1"/>
</dbReference>
<dbReference type="PRINTS" id="PR00505">
    <property type="entry name" value="D12N6MTFRASE"/>
</dbReference>
<dbReference type="SUPFAM" id="SSF53335">
    <property type="entry name" value="S-adenosyl-L-methionine-dependent methyltransferases"/>
    <property type="match status" value="1"/>
</dbReference>
<dbReference type="PROSITE" id="PS00092">
    <property type="entry name" value="N6_MTASE"/>
    <property type="match status" value="1"/>
</dbReference>
<organism>
    <name type="scientific">Haemophilus parahaemolyticus</name>
    <dbReference type="NCBI Taxonomy" id="735"/>
    <lineage>
        <taxon>Bacteria</taxon>
        <taxon>Pseudomonadati</taxon>
        <taxon>Pseudomonadota</taxon>
        <taxon>Gammaproteobacteria</taxon>
        <taxon>Pasteurellales</taxon>
        <taxon>Pasteurellaceae</taxon>
        <taxon>Haemophilus</taxon>
    </lineage>
</organism>
<proteinExistence type="inferred from homology"/>
<evidence type="ECO:0000269" key="1">
    <source>
    </source>
</evidence>
<evidence type="ECO:0000303" key="2">
    <source>
    </source>
</evidence>
<evidence type="ECO:0000303" key="3">
    <source>
    </source>
</evidence>
<evidence type="ECO:0000305" key="4"/>
<feature type="chain" id="PRO_0000087952" description="Type II methyltransferase M2.HphI">
    <location>
        <begin position="1"/>
        <end position="336"/>
    </location>
</feature>
<sequence length="336" mass="39609">MNNPKYPKVNYIGNKEKIAEWICEQLPVDVRTIADVFSGGCSFSFEAKKRGYQVIANDILNINYQLALALIVNNQEILTACDVDFIFSNPPKSGFMTKNYSDVFFFKEECRELDAIRANILKLNNTYKQALAFALMRRAMIRKMPYSRFTISWEKVKQLRDEEYSYSKYGRRRAYHNQSFEFHFRENLNSYNQAVFNNGNIHQAYNEDVFELLDHIQADAVYLDPPYTGTMNNYFGFYGLLDSYMSGEIRQPFDNHFMDKNQAVELFEKLIEKLKPFKYWLLSYNNVSRPNREELTAMLSRNGRKVTVLETPHVYKVTGKENKQKHTELLFLVENR</sequence>
<name>MTHB_HAEPH</name>